<protein>
    <recommendedName>
        <fullName>Uncharacterized protein TP_0483</fullName>
    </recommendedName>
</protein>
<organism>
    <name type="scientific">Treponema pallidum (strain Nichols)</name>
    <dbReference type="NCBI Taxonomy" id="243276"/>
    <lineage>
        <taxon>Bacteria</taxon>
        <taxon>Pseudomonadati</taxon>
        <taxon>Spirochaetota</taxon>
        <taxon>Spirochaetia</taxon>
        <taxon>Spirochaetales</taxon>
        <taxon>Treponemataceae</taxon>
        <taxon>Treponema</taxon>
    </lineage>
</organism>
<keyword id="KW-1185">Reference proteome</keyword>
<keyword id="KW-0732">Signal</keyword>
<evidence type="ECO:0000255" key="1"/>
<name>Y483_TREPA</name>
<gene>
    <name type="ordered locus">TP_0483</name>
</gene>
<feature type="signal peptide" evidence="1">
    <location>
        <begin position="1"/>
        <end position="21"/>
    </location>
</feature>
<feature type="chain" id="PRO_0000014251" description="Uncharacterized protein TP_0483">
    <location>
        <begin position="22"/>
        <end position="374"/>
    </location>
</feature>
<feature type="domain" description="Fibronectin type-III">
    <location>
        <begin position="22"/>
        <end position="102"/>
    </location>
</feature>
<dbReference type="EMBL" id="AE000520">
    <property type="protein sequence ID" value="AAC65472.1"/>
    <property type="molecule type" value="Genomic_DNA"/>
</dbReference>
<dbReference type="PIR" id="A71320">
    <property type="entry name" value="A71320"/>
</dbReference>
<dbReference type="RefSeq" id="WP_010881932.1">
    <property type="nucleotide sequence ID" value="NC_000919.1"/>
</dbReference>
<dbReference type="IntAct" id="O83496">
    <property type="interactions" value="1"/>
</dbReference>
<dbReference type="STRING" id="243276.TP_0483"/>
<dbReference type="EnsemblBacteria" id="AAC65472">
    <property type="protein sequence ID" value="AAC65472"/>
    <property type="gene ID" value="TP_0483"/>
</dbReference>
<dbReference type="KEGG" id="tpa:TP_0483"/>
<dbReference type="HOGENOM" id="CLU_683226_0_0_12"/>
<dbReference type="Proteomes" id="UP000000811">
    <property type="component" value="Chromosome"/>
</dbReference>
<dbReference type="CDD" id="cd00063">
    <property type="entry name" value="FN3"/>
    <property type="match status" value="1"/>
</dbReference>
<dbReference type="Gene3D" id="2.60.40.10">
    <property type="entry name" value="Immunoglobulins"/>
    <property type="match status" value="1"/>
</dbReference>
<dbReference type="InterPro" id="IPR003961">
    <property type="entry name" value="FN3_dom"/>
</dbReference>
<dbReference type="InterPro" id="IPR036116">
    <property type="entry name" value="FN3_sf"/>
</dbReference>
<dbReference type="InterPro" id="IPR013783">
    <property type="entry name" value="Ig-like_fold"/>
</dbReference>
<dbReference type="SUPFAM" id="SSF49265">
    <property type="entry name" value="Fibronectin type III"/>
    <property type="match status" value="1"/>
</dbReference>
<reference key="1">
    <citation type="journal article" date="1998" name="Science">
        <title>Complete genome sequence of Treponema pallidum, the syphilis spirochete.</title>
        <authorList>
            <person name="Fraser C.M."/>
            <person name="Norris S.J."/>
            <person name="Weinstock G.M."/>
            <person name="White O."/>
            <person name="Sutton G.G."/>
            <person name="Dodson R.J."/>
            <person name="Gwinn M.L."/>
            <person name="Hickey E.K."/>
            <person name="Clayton R.A."/>
            <person name="Ketchum K.A."/>
            <person name="Sodergren E."/>
            <person name="Hardham J.M."/>
            <person name="McLeod M.P."/>
            <person name="Salzberg S.L."/>
            <person name="Peterson J.D."/>
            <person name="Khalak H.G."/>
            <person name="Richardson D.L."/>
            <person name="Howell J.K."/>
            <person name="Chidambaram M."/>
            <person name="Utterback T.R."/>
            <person name="McDonald L.A."/>
            <person name="Artiach P."/>
            <person name="Bowman C."/>
            <person name="Cotton M.D."/>
            <person name="Fujii C."/>
            <person name="Garland S.A."/>
            <person name="Hatch B."/>
            <person name="Horst K."/>
            <person name="Roberts K.M."/>
            <person name="Sandusky M."/>
            <person name="Weidman J.F."/>
            <person name="Smith H.O."/>
            <person name="Venter J.C."/>
        </authorList>
    </citation>
    <scope>NUCLEOTIDE SEQUENCE [LARGE SCALE GENOMIC DNA]</scope>
    <source>
        <strain>Nichols</strain>
    </source>
</reference>
<sequence length="374" mass="42129">MSIISRVCIPCAVLLFAQLHAKELVHVSQLKEQEARISWQEVPGAVSYRVLIRNAHGRIVTNAVATTRSYSFSRLRPGSYQYQIIAYDVLHRASASAWTSLSIEKVHKPKTGGITPSTIEHVVGGEAYTVVXDRXWTYEKGWTIALFPDDKADEAGAYVKPLSVSKNKEGNWMVAIPNAALKTGSYTLRAITPRNIYAEVRGILHVVLWRRPIFFYYDLSVGYAPVYRPQDHAATINGVSDFFKICSPIGFVGTFEMCFFKRNSSTISAGFNAQMHSDSKQVDVKLDGNFAYLYELYPRIEVGGMLGLGYSLPFGQRKEDDSMYSYVTGTMKYFFTNSIYLRVQQQHMLTVKPSFTGVSLQQTPSLSFGYRFHN</sequence>
<proteinExistence type="inferred from homology"/>
<accession>O83496</accession>